<accession>Q9CMS0</accession>
<comment type="function">
    <text evidence="1">Part of the ABC transporter complex ModABC involved in molybdenum import. Responsible for energy coupling to the transport system.</text>
</comment>
<comment type="catalytic activity">
    <reaction evidence="1">
        <text>molybdate(out) + ATP + H2O = molybdate(in) + ADP + phosphate + H(+)</text>
        <dbReference type="Rhea" id="RHEA:22020"/>
        <dbReference type="ChEBI" id="CHEBI:15377"/>
        <dbReference type="ChEBI" id="CHEBI:15378"/>
        <dbReference type="ChEBI" id="CHEBI:30616"/>
        <dbReference type="ChEBI" id="CHEBI:36264"/>
        <dbReference type="ChEBI" id="CHEBI:43474"/>
        <dbReference type="ChEBI" id="CHEBI:456216"/>
        <dbReference type="EC" id="7.3.2.5"/>
    </reaction>
</comment>
<comment type="subunit">
    <text evidence="1">The complex is composed of two ATP-binding proteins (ModC), two transmembrane proteins (ModB) and a solute-binding protein (ModA).</text>
</comment>
<comment type="subcellular location">
    <subcellularLocation>
        <location evidence="1">Cell inner membrane</location>
        <topology evidence="1">Peripheral membrane protein</topology>
    </subcellularLocation>
</comment>
<comment type="similarity">
    <text evidence="1">Belongs to the ABC transporter superfamily. Molybdate importer (TC 3.A.1.8) family.</text>
</comment>
<protein>
    <recommendedName>
        <fullName evidence="1">Molybdenum import ATP-binding protein ModC</fullName>
        <ecNumber evidence="1">7.3.2.5</ecNumber>
    </recommendedName>
</protein>
<evidence type="ECO:0000255" key="1">
    <source>
        <dbReference type="HAMAP-Rule" id="MF_01705"/>
    </source>
</evidence>
<evidence type="ECO:0000255" key="2">
    <source>
        <dbReference type="PROSITE-ProRule" id="PRU01213"/>
    </source>
</evidence>
<sequence>MLKINVKKQLGQLALEANLQIPARGVTALFGLSGSGKTSLINLVSGLVHPDEGYISLNERVLVDQSKAVCIPAYQRHIGYVFQDARLFPHYTVKGNLCYGIKKIDLAKFDDIVSLLGIGHLLKRYPITLSGGEKQRVAIGRALLTQPEILLMDEPLSALDLPRKRELMSYLETLSKKIDIPILYVTHSIEELLRLAEYVVLLDEGKVRAFDRLESIWENPLFLPWKLEDEQSAVLSLPILHNNTGYQVTALGLQQQQIWIKAQQAEVGENIRICIKGSDVSLSLTQPEKTSIRNILHGKVKRIVERENRVDVQIEIDEKPIWATISKWALEDLALQLGQPVFAQIKAVSVL</sequence>
<dbReference type="EC" id="7.3.2.5" evidence="1"/>
<dbReference type="EMBL" id="AE004439">
    <property type="protein sequence ID" value="AAK02826.1"/>
    <property type="molecule type" value="Genomic_DNA"/>
</dbReference>
<dbReference type="RefSeq" id="WP_010906830.1">
    <property type="nucleotide sequence ID" value="NC_002663.1"/>
</dbReference>
<dbReference type="SMR" id="Q9CMS0"/>
<dbReference type="STRING" id="272843.PM0742"/>
<dbReference type="EnsemblBacteria" id="AAK02826">
    <property type="protein sequence ID" value="AAK02826"/>
    <property type="gene ID" value="PM0742"/>
</dbReference>
<dbReference type="KEGG" id="pmu:PM0742"/>
<dbReference type="PATRIC" id="fig|272843.6.peg.750"/>
<dbReference type="HOGENOM" id="CLU_000604_1_1_6"/>
<dbReference type="OrthoDB" id="9802264at2"/>
<dbReference type="Proteomes" id="UP000000809">
    <property type="component" value="Chromosome"/>
</dbReference>
<dbReference type="GO" id="GO:0005886">
    <property type="term" value="C:plasma membrane"/>
    <property type="evidence" value="ECO:0007669"/>
    <property type="project" value="UniProtKB-SubCell"/>
</dbReference>
<dbReference type="GO" id="GO:0015412">
    <property type="term" value="F:ABC-type molybdate transporter activity"/>
    <property type="evidence" value="ECO:0007669"/>
    <property type="project" value="UniProtKB-EC"/>
</dbReference>
<dbReference type="GO" id="GO:0005524">
    <property type="term" value="F:ATP binding"/>
    <property type="evidence" value="ECO:0007669"/>
    <property type="project" value="UniProtKB-KW"/>
</dbReference>
<dbReference type="GO" id="GO:0016887">
    <property type="term" value="F:ATP hydrolysis activity"/>
    <property type="evidence" value="ECO:0007669"/>
    <property type="project" value="InterPro"/>
</dbReference>
<dbReference type="FunFam" id="3.40.50.300:FF:000634">
    <property type="entry name" value="Molybdenum import ATP-binding protein ModC"/>
    <property type="match status" value="1"/>
</dbReference>
<dbReference type="Gene3D" id="2.40.50.100">
    <property type="match status" value="1"/>
</dbReference>
<dbReference type="Gene3D" id="3.40.50.300">
    <property type="entry name" value="P-loop containing nucleotide triphosphate hydrolases"/>
    <property type="match status" value="1"/>
</dbReference>
<dbReference type="InterPro" id="IPR003593">
    <property type="entry name" value="AAA+_ATPase"/>
</dbReference>
<dbReference type="InterPro" id="IPR003439">
    <property type="entry name" value="ABC_transporter-like_ATP-bd"/>
</dbReference>
<dbReference type="InterPro" id="IPR017871">
    <property type="entry name" value="ABC_transporter-like_CS"/>
</dbReference>
<dbReference type="InterPro" id="IPR008995">
    <property type="entry name" value="Mo/tungstate-bd_C_term_dom"/>
</dbReference>
<dbReference type="InterPro" id="IPR011868">
    <property type="entry name" value="ModC_ABC_ATP-bd"/>
</dbReference>
<dbReference type="InterPro" id="IPR050334">
    <property type="entry name" value="Molybdenum_import_ModC"/>
</dbReference>
<dbReference type="InterPro" id="IPR004606">
    <property type="entry name" value="Mop_domain"/>
</dbReference>
<dbReference type="InterPro" id="IPR027417">
    <property type="entry name" value="P-loop_NTPase"/>
</dbReference>
<dbReference type="InterPro" id="IPR005116">
    <property type="entry name" value="Transp-assoc_OB_typ1"/>
</dbReference>
<dbReference type="NCBIfam" id="TIGR02142">
    <property type="entry name" value="modC_ABC"/>
    <property type="match status" value="1"/>
</dbReference>
<dbReference type="NCBIfam" id="TIGR00638">
    <property type="entry name" value="Mop"/>
    <property type="match status" value="1"/>
</dbReference>
<dbReference type="NCBIfam" id="NF008355">
    <property type="entry name" value="PRK11144.1"/>
    <property type="match status" value="1"/>
</dbReference>
<dbReference type="PANTHER" id="PTHR43514">
    <property type="entry name" value="ABC TRANSPORTER I FAMILY MEMBER 10"/>
    <property type="match status" value="1"/>
</dbReference>
<dbReference type="PANTHER" id="PTHR43514:SF4">
    <property type="entry name" value="ABC TRANSPORTER I FAMILY MEMBER 10"/>
    <property type="match status" value="1"/>
</dbReference>
<dbReference type="Pfam" id="PF00005">
    <property type="entry name" value="ABC_tran"/>
    <property type="match status" value="1"/>
</dbReference>
<dbReference type="Pfam" id="PF03459">
    <property type="entry name" value="TOBE"/>
    <property type="match status" value="1"/>
</dbReference>
<dbReference type="SMART" id="SM00382">
    <property type="entry name" value="AAA"/>
    <property type="match status" value="1"/>
</dbReference>
<dbReference type="SUPFAM" id="SSF50331">
    <property type="entry name" value="MOP-like"/>
    <property type="match status" value="1"/>
</dbReference>
<dbReference type="SUPFAM" id="SSF52540">
    <property type="entry name" value="P-loop containing nucleoside triphosphate hydrolases"/>
    <property type="match status" value="1"/>
</dbReference>
<dbReference type="PROSITE" id="PS00211">
    <property type="entry name" value="ABC_TRANSPORTER_1"/>
    <property type="match status" value="1"/>
</dbReference>
<dbReference type="PROSITE" id="PS50893">
    <property type="entry name" value="ABC_TRANSPORTER_2"/>
    <property type="match status" value="1"/>
</dbReference>
<dbReference type="PROSITE" id="PS51241">
    <property type="entry name" value="MODC"/>
    <property type="match status" value="1"/>
</dbReference>
<dbReference type="PROSITE" id="PS51866">
    <property type="entry name" value="MOP"/>
    <property type="match status" value="1"/>
</dbReference>
<organism>
    <name type="scientific">Pasteurella multocida (strain Pm70)</name>
    <dbReference type="NCBI Taxonomy" id="272843"/>
    <lineage>
        <taxon>Bacteria</taxon>
        <taxon>Pseudomonadati</taxon>
        <taxon>Pseudomonadota</taxon>
        <taxon>Gammaproteobacteria</taxon>
        <taxon>Pasteurellales</taxon>
        <taxon>Pasteurellaceae</taxon>
        <taxon>Pasteurella</taxon>
    </lineage>
</organism>
<keyword id="KW-0067">ATP-binding</keyword>
<keyword id="KW-0997">Cell inner membrane</keyword>
<keyword id="KW-1003">Cell membrane</keyword>
<keyword id="KW-0472">Membrane</keyword>
<keyword id="KW-0500">Molybdenum</keyword>
<keyword id="KW-0547">Nucleotide-binding</keyword>
<keyword id="KW-1185">Reference proteome</keyword>
<keyword id="KW-1278">Translocase</keyword>
<keyword id="KW-0813">Transport</keyword>
<proteinExistence type="inferred from homology"/>
<name>MODC_PASMU</name>
<feature type="chain" id="PRO_0000092545" description="Molybdenum import ATP-binding protein ModC">
    <location>
        <begin position="1"/>
        <end position="351"/>
    </location>
</feature>
<feature type="domain" description="ABC transporter" evidence="1">
    <location>
        <begin position="1"/>
        <end position="229"/>
    </location>
</feature>
<feature type="domain" description="Mop" evidence="2">
    <location>
        <begin position="289"/>
        <end position="351"/>
    </location>
</feature>
<feature type="binding site" evidence="1">
    <location>
        <begin position="31"/>
        <end position="38"/>
    </location>
    <ligand>
        <name>ATP</name>
        <dbReference type="ChEBI" id="CHEBI:30616"/>
    </ligand>
</feature>
<reference key="1">
    <citation type="journal article" date="2001" name="Proc. Natl. Acad. Sci. U.S.A.">
        <title>Complete genomic sequence of Pasteurella multocida Pm70.</title>
        <authorList>
            <person name="May B.J."/>
            <person name="Zhang Q."/>
            <person name="Li L.L."/>
            <person name="Paustian M.L."/>
            <person name="Whittam T.S."/>
            <person name="Kapur V."/>
        </authorList>
    </citation>
    <scope>NUCLEOTIDE SEQUENCE [LARGE SCALE GENOMIC DNA]</scope>
    <source>
        <strain>Pm70</strain>
    </source>
</reference>
<gene>
    <name evidence="1" type="primary">modC</name>
    <name type="ordered locus">PM0742</name>
</gene>